<gene>
    <name evidence="1" type="primary">groEL</name>
    <name evidence="1" type="synonym">groL</name>
    <name type="synonym">mopA</name>
    <name type="ordered locus">CPE2289</name>
</gene>
<evidence type="ECO:0000255" key="1">
    <source>
        <dbReference type="HAMAP-Rule" id="MF_00600"/>
    </source>
</evidence>
<evidence type="ECO:0000305" key="2"/>
<accession>P26821</accession>
<keyword id="KW-0067">ATP-binding</keyword>
<keyword id="KW-0143">Chaperone</keyword>
<keyword id="KW-0963">Cytoplasm</keyword>
<keyword id="KW-0413">Isomerase</keyword>
<keyword id="KW-0547">Nucleotide-binding</keyword>
<keyword id="KW-1185">Reference proteome</keyword>
<proteinExistence type="inferred from homology"/>
<dbReference type="EC" id="5.6.1.7" evidence="1"/>
<dbReference type="EMBL" id="X62914">
    <property type="protein sequence ID" value="CAA44697.1"/>
    <property type="molecule type" value="Genomic_DNA"/>
</dbReference>
<dbReference type="EMBL" id="BA000016">
    <property type="protein sequence ID" value="BAB81995.1"/>
    <property type="molecule type" value="Genomic_DNA"/>
</dbReference>
<dbReference type="PIR" id="S22342">
    <property type="entry name" value="S22342"/>
</dbReference>
<dbReference type="RefSeq" id="WP_003462314.1">
    <property type="nucleotide sequence ID" value="NC_003366.1"/>
</dbReference>
<dbReference type="SMR" id="P26821"/>
<dbReference type="STRING" id="195102.gene:10491597"/>
<dbReference type="KEGG" id="cpe:CPE2289"/>
<dbReference type="HOGENOM" id="CLU_016503_6_1_9"/>
<dbReference type="Proteomes" id="UP000000818">
    <property type="component" value="Chromosome"/>
</dbReference>
<dbReference type="GO" id="GO:0005737">
    <property type="term" value="C:cytoplasm"/>
    <property type="evidence" value="ECO:0007669"/>
    <property type="project" value="UniProtKB-SubCell"/>
</dbReference>
<dbReference type="GO" id="GO:0005524">
    <property type="term" value="F:ATP binding"/>
    <property type="evidence" value="ECO:0007669"/>
    <property type="project" value="UniProtKB-UniRule"/>
</dbReference>
<dbReference type="GO" id="GO:0140662">
    <property type="term" value="F:ATP-dependent protein folding chaperone"/>
    <property type="evidence" value="ECO:0007669"/>
    <property type="project" value="InterPro"/>
</dbReference>
<dbReference type="GO" id="GO:0016853">
    <property type="term" value="F:isomerase activity"/>
    <property type="evidence" value="ECO:0007669"/>
    <property type="project" value="UniProtKB-KW"/>
</dbReference>
<dbReference type="GO" id="GO:0051082">
    <property type="term" value="F:unfolded protein binding"/>
    <property type="evidence" value="ECO:0007669"/>
    <property type="project" value="UniProtKB-UniRule"/>
</dbReference>
<dbReference type="GO" id="GO:0042026">
    <property type="term" value="P:protein refolding"/>
    <property type="evidence" value="ECO:0007669"/>
    <property type="project" value="UniProtKB-UniRule"/>
</dbReference>
<dbReference type="CDD" id="cd03344">
    <property type="entry name" value="GroEL"/>
    <property type="match status" value="1"/>
</dbReference>
<dbReference type="FunFam" id="3.50.7.10:FF:000001">
    <property type="entry name" value="60 kDa chaperonin"/>
    <property type="match status" value="1"/>
</dbReference>
<dbReference type="Gene3D" id="3.50.7.10">
    <property type="entry name" value="GroEL"/>
    <property type="match status" value="1"/>
</dbReference>
<dbReference type="Gene3D" id="1.10.560.10">
    <property type="entry name" value="GroEL-like equatorial domain"/>
    <property type="match status" value="1"/>
</dbReference>
<dbReference type="Gene3D" id="3.30.260.10">
    <property type="entry name" value="TCP-1-like chaperonin intermediate domain"/>
    <property type="match status" value="1"/>
</dbReference>
<dbReference type="HAMAP" id="MF_00600">
    <property type="entry name" value="CH60"/>
    <property type="match status" value="1"/>
</dbReference>
<dbReference type="InterPro" id="IPR018370">
    <property type="entry name" value="Chaperonin_Cpn60_CS"/>
</dbReference>
<dbReference type="InterPro" id="IPR001844">
    <property type="entry name" value="Cpn60/GroEL"/>
</dbReference>
<dbReference type="InterPro" id="IPR002423">
    <property type="entry name" value="Cpn60/GroEL/TCP-1"/>
</dbReference>
<dbReference type="InterPro" id="IPR027409">
    <property type="entry name" value="GroEL-like_apical_dom_sf"/>
</dbReference>
<dbReference type="InterPro" id="IPR027413">
    <property type="entry name" value="GROEL-like_equatorial_sf"/>
</dbReference>
<dbReference type="InterPro" id="IPR027410">
    <property type="entry name" value="TCP-1-like_intermed_sf"/>
</dbReference>
<dbReference type="NCBIfam" id="TIGR02348">
    <property type="entry name" value="GroEL"/>
    <property type="match status" value="1"/>
</dbReference>
<dbReference type="NCBIfam" id="NF000592">
    <property type="entry name" value="PRK00013.1"/>
    <property type="match status" value="1"/>
</dbReference>
<dbReference type="NCBIfam" id="NF009487">
    <property type="entry name" value="PRK12849.1"/>
    <property type="match status" value="1"/>
</dbReference>
<dbReference type="NCBIfam" id="NF009488">
    <property type="entry name" value="PRK12850.1"/>
    <property type="match status" value="1"/>
</dbReference>
<dbReference type="NCBIfam" id="NF009489">
    <property type="entry name" value="PRK12851.1"/>
    <property type="match status" value="1"/>
</dbReference>
<dbReference type="PANTHER" id="PTHR45633">
    <property type="entry name" value="60 KDA HEAT SHOCK PROTEIN, MITOCHONDRIAL"/>
    <property type="match status" value="1"/>
</dbReference>
<dbReference type="Pfam" id="PF00118">
    <property type="entry name" value="Cpn60_TCP1"/>
    <property type="match status" value="1"/>
</dbReference>
<dbReference type="PRINTS" id="PR00298">
    <property type="entry name" value="CHAPERONIN60"/>
</dbReference>
<dbReference type="SUPFAM" id="SSF52029">
    <property type="entry name" value="GroEL apical domain-like"/>
    <property type="match status" value="1"/>
</dbReference>
<dbReference type="SUPFAM" id="SSF48592">
    <property type="entry name" value="GroEL equatorial domain-like"/>
    <property type="match status" value="1"/>
</dbReference>
<dbReference type="SUPFAM" id="SSF54849">
    <property type="entry name" value="GroEL-intermediate domain like"/>
    <property type="match status" value="1"/>
</dbReference>
<dbReference type="PROSITE" id="PS00296">
    <property type="entry name" value="CHAPERONINS_CPN60"/>
    <property type="match status" value="1"/>
</dbReference>
<name>CH60_CLOPE</name>
<organism>
    <name type="scientific">Clostridium perfringens (strain 13 / Type A)</name>
    <dbReference type="NCBI Taxonomy" id="195102"/>
    <lineage>
        <taxon>Bacteria</taxon>
        <taxon>Bacillati</taxon>
        <taxon>Bacillota</taxon>
        <taxon>Clostridia</taxon>
        <taxon>Eubacteriales</taxon>
        <taxon>Clostridiaceae</taxon>
        <taxon>Clostridium</taxon>
    </lineage>
</organism>
<protein>
    <recommendedName>
        <fullName evidence="1">Chaperonin GroEL</fullName>
        <ecNumber evidence="1">5.6.1.7</ecNumber>
    </recommendedName>
    <alternativeName>
        <fullName evidence="1">60 kDa chaperonin</fullName>
    </alternativeName>
    <alternativeName>
        <fullName evidence="1">Chaperonin-60</fullName>
        <shortName evidence="1">Cpn60</shortName>
    </alternativeName>
</protein>
<sequence length="539" mass="57367">MAKTLLFGEEARRSMQAGVDKLANTVKVTLGPKGRNVILDKKFGSPLITNDGVTIAREIELEDAYENMGAQLVKEVATKTNDVAGDGTTTATLLAQAIIREGLKNVTAGANPILIRNGIKTAVEKAVEEIQKISKPVNGKEDIARVAAISAADEKIGKLIADAMEKVGNEGVITVEESKSMGTELDVVEGMQFDRGYVSAYMVTDTEKMEAVLDNPLVLITDKKISNIQDLLPLLEQIVQAGKKLLIIADDIEGEAMTTLVVNKLRGTFTCVGVKAPGFGDRRKEMLQDIATLTGGVVISDEVGGDLKEATLDMLGEAESVKVTKESTTIVNGRGNSEEIKNRVNQIKLQLEATTSEFDKEKLQERLAKLAGGVAVVKVGAATETELKESKLRIEDALAATKAAVEEGIVPGGGTAYVNVINEVAKLTSDIQDEQVGINIIVRSLEEPMRQIAHNAGLEGSVIIEKVKNSDAGVGFDALRGEYKDMIKAGIVDPTKVTRSALQNAASVASTFLTTEAAVADIPEKEMPQGAGMGMDGMY</sequence>
<reference key="1">
    <citation type="journal article" date="1992" name="Biochim. Biophys. Acta">
        <title>Cloning of HSP60 (GroEL) operon from Clostridium perfringens using a polymerase chain reaction based approach.</title>
        <authorList>
            <person name="Rusanganwa E."/>
            <person name="Singh B."/>
            <person name="Gupta R.S."/>
        </authorList>
    </citation>
    <scope>NUCLEOTIDE SEQUENCE [GENOMIC DNA]</scope>
</reference>
<reference key="2">
    <citation type="journal article" date="2002" name="Proc. Natl. Acad. Sci. U.S.A.">
        <title>Complete genome sequence of Clostridium perfringens, an anaerobic flesh-eater.</title>
        <authorList>
            <person name="Shimizu T."/>
            <person name="Ohtani K."/>
            <person name="Hirakawa H."/>
            <person name="Ohshima K."/>
            <person name="Yamashita A."/>
            <person name="Shiba T."/>
            <person name="Ogasawara N."/>
            <person name="Hattori M."/>
            <person name="Kuhara S."/>
            <person name="Hayashi H."/>
        </authorList>
    </citation>
    <scope>NUCLEOTIDE SEQUENCE [LARGE SCALE GENOMIC DNA]</scope>
    <source>
        <strain>13 / Type A</strain>
    </source>
</reference>
<comment type="function">
    <text evidence="1">Together with its co-chaperonin GroES, plays an essential role in assisting protein folding. The GroEL-GroES system forms a nano-cage that allows encapsulation of the non-native substrate proteins and provides a physical environment optimized to promote and accelerate protein folding.</text>
</comment>
<comment type="catalytic activity">
    <reaction evidence="1">
        <text>ATP + H2O + a folded polypeptide = ADP + phosphate + an unfolded polypeptide.</text>
        <dbReference type="EC" id="5.6.1.7"/>
    </reaction>
</comment>
<comment type="subunit">
    <text evidence="1">Forms a cylinder of 14 subunits composed of two heptameric rings stacked back-to-back. Interacts with the co-chaperonin GroES.</text>
</comment>
<comment type="subcellular location">
    <subcellularLocation>
        <location evidence="1">Cytoplasm</location>
    </subcellularLocation>
</comment>
<comment type="similarity">
    <text evidence="1">Belongs to the chaperonin (HSP60) family.</text>
</comment>
<feature type="chain" id="PRO_0000063342" description="Chaperonin GroEL">
    <location>
        <begin position="1"/>
        <end position="539"/>
    </location>
</feature>
<feature type="binding site" evidence="1">
    <location>
        <begin position="29"/>
        <end position="32"/>
    </location>
    <ligand>
        <name>ATP</name>
        <dbReference type="ChEBI" id="CHEBI:30616"/>
    </ligand>
</feature>
<feature type="binding site" evidence="1">
    <location>
        <begin position="86"/>
        <end position="90"/>
    </location>
    <ligand>
        <name>ATP</name>
        <dbReference type="ChEBI" id="CHEBI:30616"/>
    </ligand>
</feature>
<feature type="binding site" evidence="1">
    <location>
        <position position="413"/>
    </location>
    <ligand>
        <name>ATP</name>
        <dbReference type="ChEBI" id="CHEBI:30616"/>
    </ligand>
</feature>
<feature type="binding site" evidence="1">
    <location>
        <begin position="477"/>
        <end position="479"/>
    </location>
    <ligand>
        <name>ATP</name>
        <dbReference type="ChEBI" id="CHEBI:30616"/>
    </ligand>
</feature>
<feature type="binding site" evidence="1">
    <location>
        <position position="493"/>
    </location>
    <ligand>
        <name>ATP</name>
        <dbReference type="ChEBI" id="CHEBI:30616"/>
    </ligand>
</feature>
<feature type="sequence conflict" description="In Ref. 1; CAA44697." evidence="2" ref="1">
    <original>V</original>
    <variation>I</variation>
    <location>
        <position position="344"/>
    </location>
</feature>